<dbReference type="EC" id="5.4.99.12" evidence="1"/>
<dbReference type="EMBL" id="CP000057">
    <property type="protein sequence ID" value="AAX88218.1"/>
    <property type="molecule type" value="Genomic_DNA"/>
</dbReference>
<dbReference type="RefSeq" id="WP_011272450.1">
    <property type="nucleotide sequence ID" value="NC_007146.2"/>
</dbReference>
<dbReference type="SMR" id="Q4QL79"/>
<dbReference type="KEGG" id="hit:NTHI1395"/>
<dbReference type="HOGENOM" id="CLU_014673_0_2_6"/>
<dbReference type="Proteomes" id="UP000002525">
    <property type="component" value="Chromosome"/>
</dbReference>
<dbReference type="GO" id="GO:0003723">
    <property type="term" value="F:RNA binding"/>
    <property type="evidence" value="ECO:0007669"/>
    <property type="project" value="InterPro"/>
</dbReference>
<dbReference type="GO" id="GO:0160147">
    <property type="term" value="F:tRNA pseudouridine(38-40) synthase activity"/>
    <property type="evidence" value="ECO:0007669"/>
    <property type="project" value="UniProtKB-EC"/>
</dbReference>
<dbReference type="GO" id="GO:0031119">
    <property type="term" value="P:tRNA pseudouridine synthesis"/>
    <property type="evidence" value="ECO:0007669"/>
    <property type="project" value="UniProtKB-UniRule"/>
</dbReference>
<dbReference type="CDD" id="cd02570">
    <property type="entry name" value="PseudoU_synth_EcTruA"/>
    <property type="match status" value="1"/>
</dbReference>
<dbReference type="FunFam" id="3.30.70.580:FF:000001">
    <property type="entry name" value="tRNA pseudouridine synthase A"/>
    <property type="match status" value="1"/>
</dbReference>
<dbReference type="FunFam" id="3.30.70.660:FF:000001">
    <property type="entry name" value="tRNA pseudouridine synthase A"/>
    <property type="match status" value="1"/>
</dbReference>
<dbReference type="Gene3D" id="3.30.70.660">
    <property type="entry name" value="Pseudouridine synthase I, catalytic domain, C-terminal subdomain"/>
    <property type="match status" value="1"/>
</dbReference>
<dbReference type="Gene3D" id="3.30.70.580">
    <property type="entry name" value="Pseudouridine synthase I, catalytic domain, N-terminal subdomain"/>
    <property type="match status" value="1"/>
</dbReference>
<dbReference type="HAMAP" id="MF_00171">
    <property type="entry name" value="TruA"/>
    <property type="match status" value="1"/>
</dbReference>
<dbReference type="InterPro" id="IPR020103">
    <property type="entry name" value="PsdUridine_synth_cat_dom_sf"/>
</dbReference>
<dbReference type="InterPro" id="IPR001406">
    <property type="entry name" value="PsdUridine_synth_TruA"/>
</dbReference>
<dbReference type="InterPro" id="IPR020097">
    <property type="entry name" value="PsdUridine_synth_TruA_a/b_dom"/>
</dbReference>
<dbReference type="InterPro" id="IPR020095">
    <property type="entry name" value="PsdUridine_synth_TruA_C"/>
</dbReference>
<dbReference type="InterPro" id="IPR020094">
    <property type="entry name" value="TruA/RsuA/RluB/E/F_N"/>
</dbReference>
<dbReference type="NCBIfam" id="TIGR00071">
    <property type="entry name" value="hisT_truA"/>
    <property type="match status" value="1"/>
</dbReference>
<dbReference type="PANTHER" id="PTHR11142">
    <property type="entry name" value="PSEUDOURIDYLATE SYNTHASE"/>
    <property type="match status" value="1"/>
</dbReference>
<dbReference type="PANTHER" id="PTHR11142:SF0">
    <property type="entry name" value="TRNA PSEUDOURIDINE SYNTHASE-LIKE 1"/>
    <property type="match status" value="1"/>
</dbReference>
<dbReference type="Pfam" id="PF01416">
    <property type="entry name" value="PseudoU_synth_1"/>
    <property type="match status" value="2"/>
</dbReference>
<dbReference type="PIRSF" id="PIRSF001430">
    <property type="entry name" value="tRNA_psdUrid_synth"/>
    <property type="match status" value="1"/>
</dbReference>
<dbReference type="SUPFAM" id="SSF55120">
    <property type="entry name" value="Pseudouridine synthase"/>
    <property type="match status" value="1"/>
</dbReference>
<name>TRUA_HAEI8</name>
<keyword id="KW-0413">Isomerase</keyword>
<keyword id="KW-0819">tRNA processing</keyword>
<organism>
    <name type="scientific">Haemophilus influenzae (strain 86-028NP)</name>
    <dbReference type="NCBI Taxonomy" id="281310"/>
    <lineage>
        <taxon>Bacteria</taxon>
        <taxon>Pseudomonadati</taxon>
        <taxon>Pseudomonadota</taxon>
        <taxon>Gammaproteobacteria</taxon>
        <taxon>Pasteurellales</taxon>
        <taxon>Pasteurellaceae</taxon>
        <taxon>Haemophilus</taxon>
    </lineage>
</organism>
<accession>Q4QL79</accession>
<feature type="chain" id="PRO_1000017089" description="tRNA pseudouridine synthase A">
    <location>
        <begin position="1"/>
        <end position="269"/>
    </location>
</feature>
<feature type="active site" description="Nucleophile" evidence="1">
    <location>
        <position position="51"/>
    </location>
</feature>
<feature type="binding site" evidence="1">
    <location>
        <position position="109"/>
    </location>
    <ligand>
        <name>substrate</name>
    </ligand>
</feature>
<proteinExistence type="inferred from homology"/>
<sequence>MKIALGIEYNGQNYYGWQRQEKVRSVQEELEKALSHIANEKIEIFCAGRTDSGVSGTGQVVHFETNAVRPEKAWAFGTNAHLPDDIAVAWAKQVDDEFHARFSATARRYRYILYCNKLRSAILAGGITHCHLDLDAEKMHQAGQCLLGEQDFSSFRAAQCQSHTPWRNVHHLNVSRIGKYIIVDIQANAFVHHMVRNIVGSLIEVGAGNQPIEWMQWLLEQKNRQLAAPTAKPDGLYLVDVIYPQKFDIPKRPIGPLFLEDGLLNRTLK</sequence>
<reference key="1">
    <citation type="journal article" date="2005" name="J. Bacteriol.">
        <title>Genomic sequence of an otitis media isolate of nontypeable Haemophilus influenzae: comparative study with H. influenzae serotype d, strain KW20.</title>
        <authorList>
            <person name="Harrison A."/>
            <person name="Dyer D.W."/>
            <person name="Gillaspy A."/>
            <person name="Ray W.C."/>
            <person name="Mungur R."/>
            <person name="Carson M.B."/>
            <person name="Zhong H."/>
            <person name="Gipson J."/>
            <person name="Gipson M."/>
            <person name="Johnson L.S."/>
            <person name="Lewis L."/>
            <person name="Bakaletz L.O."/>
            <person name="Munson R.S. Jr."/>
        </authorList>
    </citation>
    <scope>NUCLEOTIDE SEQUENCE [LARGE SCALE GENOMIC DNA]</scope>
    <source>
        <strain>86-028NP</strain>
    </source>
</reference>
<gene>
    <name evidence="1" type="primary">truA</name>
    <name type="ordered locus">NTHI1395</name>
</gene>
<protein>
    <recommendedName>
        <fullName evidence="1">tRNA pseudouridine synthase A</fullName>
        <ecNumber evidence="1">5.4.99.12</ecNumber>
    </recommendedName>
    <alternativeName>
        <fullName evidence="1">tRNA pseudouridine(38-40) synthase</fullName>
    </alternativeName>
    <alternativeName>
        <fullName evidence="1">tRNA pseudouridylate synthase I</fullName>
    </alternativeName>
    <alternativeName>
        <fullName evidence="1">tRNA-uridine isomerase I</fullName>
    </alternativeName>
</protein>
<evidence type="ECO:0000255" key="1">
    <source>
        <dbReference type="HAMAP-Rule" id="MF_00171"/>
    </source>
</evidence>
<comment type="function">
    <text evidence="1">Formation of pseudouridine at positions 38, 39 and 40 in the anticodon stem and loop of transfer RNAs.</text>
</comment>
<comment type="catalytic activity">
    <reaction evidence="1">
        <text>uridine(38/39/40) in tRNA = pseudouridine(38/39/40) in tRNA</text>
        <dbReference type="Rhea" id="RHEA:22376"/>
        <dbReference type="Rhea" id="RHEA-COMP:10085"/>
        <dbReference type="Rhea" id="RHEA-COMP:10087"/>
        <dbReference type="ChEBI" id="CHEBI:65314"/>
        <dbReference type="ChEBI" id="CHEBI:65315"/>
        <dbReference type="EC" id="5.4.99.12"/>
    </reaction>
</comment>
<comment type="subunit">
    <text evidence="1">Homodimer.</text>
</comment>
<comment type="similarity">
    <text evidence="1">Belongs to the tRNA pseudouridine synthase TruA family.</text>
</comment>